<sequence>MVKRTYQPNKRKHSKVHGFRKRMSTKNGRKVLARRRRKGRKVLSA</sequence>
<keyword id="KW-0687">Ribonucleoprotein</keyword>
<keyword id="KW-0689">Ribosomal protein</keyword>
<proteinExistence type="inferred from homology"/>
<gene>
    <name evidence="1" type="primary">rpmH</name>
    <name type="ordered locus">SACOL2740</name>
</gene>
<protein>
    <recommendedName>
        <fullName evidence="1">Large ribosomal subunit protein bL34</fullName>
    </recommendedName>
    <alternativeName>
        <fullName evidence="3">50S ribosomal protein L34</fullName>
    </alternativeName>
</protein>
<dbReference type="EMBL" id="CP000046">
    <property type="protein sequence ID" value="AAW37388.1"/>
    <property type="molecule type" value="Genomic_DNA"/>
</dbReference>
<dbReference type="RefSeq" id="WP_000240855.1">
    <property type="nucleotide sequence ID" value="NZ_JBGOFO010000001.1"/>
</dbReference>
<dbReference type="SMR" id="Q5HCI1"/>
<dbReference type="GeneID" id="98347025"/>
<dbReference type="KEGG" id="sac:SACOL2740"/>
<dbReference type="HOGENOM" id="CLU_129938_2_0_9"/>
<dbReference type="Proteomes" id="UP000000530">
    <property type="component" value="Chromosome"/>
</dbReference>
<dbReference type="GO" id="GO:1990904">
    <property type="term" value="C:ribonucleoprotein complex"/>
    <property type="evidence" value="ECO:0007669"/>
    <property type="project" value="UniProtKB-KW"/>
</dbReference>
<dbReference type="GO" id="GO:0005840">
    <property type="term" value="C:ribosome"/>
    <property type="evidence" value="ECO:0007669"/>
    <property type="project" value="UniProtKB-KW"/>
</dbReference>
<dbReference type="GO" id="GO:0003735">
    <property type="term" value="F:structural constituent of ribosome"/>
    <property type="evidence" value="ECO:0007669"/>
    <property type="project" value="InterPro"/>
</dbReference>
<dbReference type="GO" id="GO:0006412">
    <property type="term" value="P:translation"/>
    <property type="evidence" value="ECO:0007669"/>
    <property type="project" value="UniProtKB-UniRule"/>
</dbReference>
<dbReference type="FunFam" id="1.10.287.3980:FF:000001">
    <property type="entry name" value="Mitochondrial ribosomal protein L34"/>
    <property type="match status" value="1"/>
</dbReference>
<dbReference type="Gene3D" id="1.10.287.3980">
    <property type="match status" value="1"/>
</dbReference>
<dbReference type="HAMAP" id="MF_00391">
    <property type="entry name" value="Ribosomal_bL34"/>
    <property type="match status" value="1"/>
</dbReference>
<dbReference type="InterPro" id="IPR000271">
    <property type="entry name" value="Ribosomal_bL34"/>
</dbReference>
<dbReference type="InterPro" id="IPR020939">
    <property type="entry name" value="Ribosomal_bL34_CS"/>
</dbReference>
<dbReference type="NCBIfam" id="TIGR01030">
    <property type="entry name" value="rpmH_bact"/>
    <property type="match status" value="1"/>
</dbReference>
<dbReference type="PANTHER" id="PTHR14503:SF4">
    <property type="entry name" value="LARGE RIBOSOMAL SUBUNIT PROTEIN BL34M"/>
    <property type="match status" value="1"/>
</dbReference>
<dbReference type="PANTHER" id="PTHR14503">
    <property type="entry name" value="MITOCHONDRIAL RIBOSOMAL PROTEIN 34 FAMILY MEMBER"/>
    <property type="match status" value="1"/>
</dbReference>
<dbReference type="Pfam" id="PF00468">
    <property type="entry name" value="Ribosomal_L34"/>
    <property type="match status" value="1"/>
</dbReference>
<dbReference type="PROSITE" id="PS00784">
    <property type="entry name" value="RIBOSOMAL_L34"/>
    <property type="match status" value="1"/>
</dbReference>
<evidence type="ECO:0000255" key="1">
    <source>
        <dbReference type="HAMAP-Rule" id="MF_00391"/>
    </source>
</evidence>
<evidence type="ECO:0000256" key="2">
    <source>
        <dbReference type="SAM" id="MobiDB-lite"/>
    </source>
</evidence>
<evidence type="ECO:0000305" key="3"/>
<name>RL34_STAAC</name>
<reference key="1">
    <citation type="journal article" date="2005" name="J. Bacteriol.">
        <title>Insights on evolution of virulence and resistance from the complete genome analysis of an early methicillin-resistant Staphylococcus aureus strain and a biofilm-producing methicillin-resistant Staphylococcus epidermidis strain.</title>
        <authorList>
            <person name="Gill S.R."/>
            <person name="Fouts D.E."/>
            <person name="Archer G.L."/>
            <person name="Mongodin E.F."/>
            <person name="DeBoy R.T."/>
            <person name="Ravel J."/>
            <person name="Paulsen I.T."/>
            <person name="Kolonay J.F."/>
            <person name="Brinkac L.M."/>
            <person name="Beanan M.J."/>
            <person name="Dodson R.J."/>
            <person name="Daugherty S.C."/>
            <person name="Madupu R."/>
            <person name="Angiuoli S.V."/>
            <person name="Durkin A.S."/>
            <person name="Haft D.H."/>
            <person name="Vamathevan J.J."/>
            <person name="Khouri H."/>
            <person name="Utterback T.R."/>
            <person name="Lee C."/>
            <person name="Dimitrov G."/>
            <person name="Jiang L."/>
            <person name="Qin H."/>
            <person name="Weidman J."/>
            <person name="Tran K."/>
            <person name="Kang K.H."/>
            <person name="Hance I.R."/>
            <person name="Nelson K.E."/>
            <person name="Fraser C.M."/>
        </authorList>
    </citation>
    <scope>NUCLEOTIDE SEQUENCE [LARGE SCALE GENOMIC DNA]</scope>
    <source>
        <strain>COL</strain>
    </source>
</reference>
<comment type="similarity">
    <text evidence="1">Belongs to the bacterial ribosomal protein bL34 family.</text>
</comment>
<feature type="chain" id="PRO_0000187460" description="Large ribosomal subunit protein bL34">
    <location>
        <begin position="1"/>
        <end position="45"/>
    </location>
</feature>
<feature type="region of interest" description="Disordered" evidence="2">
    <location>
        <begin position="1"/>
        <end position="45"/>
    </location>
</feature>
<accession>Q5HCI1</accession>
<organism>
    <name type="scientific">Staphylococcus aureus (strain COL)</name>
    <dbReference type="NCBI Taxonomy" id="93062"/>
    <lineage>
        <taxon>Bacteria</taxon>
        <taxon>Bacillati</taxon>
        <taxon>Bacillota</taxon>
        <taxon>Bacilli</taxon>
        <taxon>Bacillales</taxon>
        <taxon>Staphylococcaceae</taxon>
        <taxon>Staphylococcus</taxon>
    </lineage>
</organism>